<proteinExistence type="evidence at protein level"/>
<organism>
    <name type="scientific">Homo sapiens</name>
    <name type="common">Human</name>
    <dbReference type="NCBI Taxonomy" id="9606"/>
    <lineage>
        <taxon>Eukaryota</taxon>
        <taxon>Metazoa</taxon>
        <taxon>Chordata</taxon>
        <taxon>Craniata</taxon>
        <taxon>Vertebrata</taxon>
        <taxon>Euteleostomi</taxon>
        <taxon>Mammalia</taxon>
        <taxon>Eutheria</taxon>
        <taxon>Euarchontoglires</taxon>
        <taxon>Primates</taxon>
        <taxon>Haplorrhini</taxon>
        <taxon>Catarrhini</taxon>
        <taxon>Hominidae</taxon>
        <taxon>Homo</taxon>
    </lineage>
</organism>
<gene>
    <name evidence="8" type="primary">ATP5MF</name>
    <name type="synonym">ATP5J2</name>
    <name type="synonym">ATP5JL</name>
</gene>
<reference key="1">
    <citation type="submission" date="1998-08" db="EMBL/GenBank/DDBJ databases">
        <title>cDNA cloning, and chromosomal localization of a human F1F0-type ATPase subunit f.</title>
        <authorList>
            <person name="Lee H.C."/>
            <person name="Kang Y.J."/>
            <person name="Park D.S."/>
            <person name="Lee C.M."/>
            <person name="Cho W.K."/>
            <person name="Ahn H.J."/>
            <person name="Lee M.Y."/>
            <person name="Hwang M.Y."/>
            <person name="Jin S.W."/>
            <person name="Sohn U.I.K."/>
        </authorList>
    </citation>
    <scope>NUCLEOTIDE SEQUENCE [MRNA] (ISOFORM 1)</scope>
    <source>
        <tissue>Thymus</tissue>
    </source>
</reference>
<reference key="2">
    <citation type="journal article" date="1998" name="Proc. Natl. Acad. Sci. U.S.A.">
        <title>Identification of genes expressed in human CD34(+) hematopoietic stem/progenitor cells by expressed sequence tags and efficient full-length cDNA cloning.</title>
        <authorList>
            <person name="Mao M."/>
            <person name="Fu G."/>
            <person name="Wu J.-S."/>
            <person name="Zhang Q.-H."/>
            <person name="Zhou J."/>
            <person name="Kan L.-X."/>
            <person name="Huang Q.-H."/>
            <person name="He K.-L."/>
            <person name="Gu B.-W."/>
            <person name="Han Z.-G."/>
            <person name="Shen Y."/>
            <person name="Gu J."/>
            <person name="Yu Y.-P."/>
            <person name="Xu S.-H."/>
            <person name="Wang Y.-X."/>
            <person name="Chen S.-J."/>
            <person name="Chen Z."/>
        </authorList>
    </citation>
    <scope>NUCLEOTIDE SEQUENCE [LARGE SCALE MRNA] (ISOFORM 1)</scope>
    <source>
        <tissue>Umbilical cord blood</tissue>
    </source>
</reference>
<reference key="3">
    <citation type="submission" date="2001-07" db="EMBL/GenBank/DDBJ databases">
        <title>F1Fo-ATP synthase complex Fo membrane domain f subunit of Homo sapiens.</title>
        <authorList>
            <person name="Guo J.H."/>
            <person name="Yu L."/>
            <person name="Dai F.Y."/>
            <person name="She X.Y."/>
        </authorList>
    </citation>
    <scope>NUCLEOTIDE SEQUENCE [LARGE SCALE MRNA] (ISOFORM 2)</scope>
</reference>
<reference key="4">
    <citation type="submission" date="2004-06" db="EMBL/GenBank/DDBJ databases">
        <title>Cloning of human full open reading frames in Gateway(TM) system entry vector (pDONR201).</title>
        <authorList>
            <person name="Ebert L."/>
            <person name="Schick M."/>
            <person name="Neubert P."/>
            <person name="Schatten R."/>
            <person name="Henze S."/>
            <person name="Korn B."/>
        </authorList>
    </citation>
    <scope>NUCLEOTIDE SEQUENCE [LARGE SCALE MRNA]</scope>
</reference>
<reference key="5">
    <citation type="journal article" date="2003" name="Nature">
        <title>The DNA sequence of human chromosome 7.</title>
        <authorList>
            <person name="Hillier L.W."/>
            <person name="Fulton R.S."/>
            <person name="Fulton L.A."/>
            <person name="Graves T.A."/>
            <person name="Pepin K.H."/>
            <person name="Wagner-McPherson C."/>
            <person name="Layman D."/>
            <person name="Maas J."/>
            <person name="Jaeger S."/>
            <person name="Walker R."/>
            <person name="Wylie K."/>
            <person name="Sekhon M."/>
            <person name="Becker M.C."/>
            <person name="O'Laughlin M.D."/>
            <person name="Schaller M.E."/>
            <person name="Fewell G.A."/>
            <person name="Delehaunty K.D."/>
            <person name="Miner T.L."/>
            <person name="Nash W.E."/>
            <person name="Cordes M."/>
            <person name="Du H."/>
            <person name="Sun H."/>
            <person name="Edwards J."/>
            <person name="Bradshaw-Cordum H."/>
            <person name="Ali J."/>
            <person name="Andrews S."/>
            <person name="Isak A."/>
            <person name="Vanbrunt A."/>
            <person name="Nguyen C."/>
            <person name="Du F."/>
            <person name="Lamar B."/>
            <person name="Courtney L."/>
            <person name="Kalicki J."/>
            <person name="Ozersky P."/>
            <person name="Bielicki L."/>
            <person name="Scott K."/>
            <person name="Holmes A."/>
            <person name="Harkins R."/>
            <person name="Harris A."/>
            <person name="Strong C.M."/>
            <person name="Hou S."/>
            <person name="Tomlinson C."/>
            <person name="Dauphin-Kohlberg S."/>
            <person name="Kozlowicz-Reilly A."/>
            <person name="Leonard S."/>
            <person name="Rohlfing T."/>
            <person name="Rock S.M."/>
            <person name="Tin-Wollam A.-M."/>
            <person name="Abbott A."/>
            <person name="Minx P."/>
            <person name="Maupin R."/>
            <person name="Strowmatt C."/>
            <person name="Latreille P."/>
            <person name="Miller N."/>
            <person name="Johnson D."/>
            <person name="Murray J."/>
            <person name="Woessner J.P."/>
            <person name="Wendl M.C."/>
            <person name="Yang S.-P."/>
            <person name="Schultz B.R."/>
            <person name="Wallis J.W."/>
            <person name="Spieth J."/>
            <person name="Bieri T.A."/>
            <person name="Nelson J.O."/>
            <person name="Berkowicz N."/>
            <person name="Wohldmann P.E."/>
            <person name="Cook L.L."/>
            <person name="Hickenbotham M.T."/>
            <person name="Eldred J."/>
            <person name="Williams D."/>
            <person name="Bedell J.A."/>
            <person name="Mardis E.R."/>
            <person name="Clifton S.W."/>
            <person name="Chissoe S.L."/>
            <person name="Marra M.A."/>
            <person name="Raymond C."/>
            <person name="Haugen E."/>
            <person name="Gillett W."/>
            <person name="Zhou Y."/>
            <person name="James R."/>
            <person name="Phelps K."/>
            <person name="Iadanoto S."/>
            <person name="Bubb K."/>
            <person name="Simms E."/>
            <person name="Levy R."/>
            <person name="Clendenning J."/>
            <person name="Kaul R."/>
            <person name="Kent W.J."/>
            <person name="Furey T.S."/>
            <person name="Baertsch R.A."/>
            <person name="Brent M.R."/>
            <person name="Keibler E."/>
            <person name="Flicek P."/>
            <person name="Bork P."/>
            <person name="Suyama M."/>
            <person name="Bailey J.A."/>
            <person name="Portnoy M.E."/>
            <person name="Torrents D."/>
            <person name="Chinwalla A.T."/>
            <person name="Gish W.R."/>
            <person name="Eddy S.R."/>
            <person name="McPherson J.D."/>
            <person name="Olson M.V."/>
            <person name="Eichler E.E."/>
            <person name="Green E.D."/>
            <person name="Waterston R.H."/>
            <person name="Wilson R.K."/>
        </authorList>
    </citation>
    <scope>NUCLEOTIDE SEQUENCE [LARGE SCALE GENOMIC DNA]</scope>
</reference>
<reference key="6">
    <citation type="journal article" date="2003" name="Science">
        <title>Human chromosome 7: DNA sequence and biology.</title>
        <authorList>
            <person name="Scherer S.W."/>
            <person name="Cheung J."/>
            <person name="MacDonald J.R."/>
            <person name="Osborne L.R."/>
            <person name="Nakabayashi K."/>
            <person name="Herbrick J.-A."/>
            <person name="Carson A.R."/>
            <person name="Parker-Katiraee L."/>
            <person name="Skaug J."/>
            <person name="Khaja R."/>
            <person name="Zhang J."/>
            <person name="Hudek A.K."/>
            <person name="Li M."/>
            <person name="Haddad M."/>
            <person name="Duggan G.E."/>
            <person name="Fernandez B.A."/>
            <person name="Kanematsu E."/>
            <person name="Gentles S."/>
            <person name="Christopoulos C.C."/>
            <person name="Choufani S."/>
            <person name="Kwasnicka D."/>
            <person name="Zheng X.H."/>
            <person name="Lai Z."/>
            <person name="Nusskern D.R."/>
            <person name="Zhang Q."/>
            <person name="Gu Z."/>
            <person name="Lu F."/>
            <person name="Zeesman S."/>
            <person name="Nowaczyk M.J."/>
            <person name="Teshima I."/>
            <person name="Chitayat D."/>
            <person name="Shuman C."/>
            <person name="Weksberg R."/>
            <person name="Zackai E.H."/>
            <person name="Grebe T.A."/>
            <person name="Cox S.R."/>
            <person name="Kirkpatrick S.J."/>
            <person name="Rahman N."/>
            <person name="Friedman J.M."/>
            <person name="Heng H.H.Q."/>
            <person name="Pelicci P.G."/>
            <person name="Lo-Coco F."/>
            <person name="Belloni E."/>
            <person name="Shaffer L.G."/>
            <person name="Pober B."/>
            <person name="Morton C.C."/>
            <person name="Gusella J.F."/>
            <person name="Bruns G.A.P."/>
            <person name="Korf B.R."/>
            <person name="Quade B.J."/>
            <person name="Ligon A.H."/>
            <person name="Ferguson H."/>
            <person name="Higgins A.W."/>
            <person name="Leach N.T."/>
            <person name="Herrick S.R."/>
            <person name="Lemyre E."/>
            <person name="Farra C.G."/>
            <person name="Kim H.-G."/>
            <person name="Summers A.M."/>
            <person name="Gripp K.W."/>
            <person name="Roberts W."/>
            <person name="Szatmari P."/>
            <person name="Winsor E.J.T."/>
            <person name="Grzeschik K.-H."/>
            <person name="Teebi A."/>
            <person name="Minassian B.A."/>
            <person name="Kere J."/>
            <person name="Armengol L."/>
            <person name="Pujana M.A."/>
            <person name="Estivill X."/>
            <person name="Wilson M.D."/>
            <person name="Koop B.F."/>
            <person name="Tosi S."/>
            <person name="Moore G.E."/>
            <person name="Boright A.P."/>
            <person name="Zlotorynski E."/>
            <person name="Kerem B."/>
            <person name="Kroisel P.M."/>
            <person name="Petek E."/>
            <person name="Oscier D.G."/>
            <person name="Mould S.J."/>
            <person name="Doehner H."/>
            <person name="Doehner K."/>
            <person name="Rommens J.M."/>
            <person name="Vincent J.B."/>
            <person name="Venter J.C."/>
            <person name="Li P.W."/>
            <person name="Mural R.J."/>
            <person name="Adams M.D."/>
            <person name="Tsui L.-C."/>
        </authorList>
    </citation>
    <scope>NUCLEOTIDE SEQUENCE [LARGE SCALE GENOMIC DNA]</scope>
</reference>
<reference key="7">
    <citation type="submission" date="2005-09" db="EMBL/GenBank/DDBJ databases">
        <authorList>
            <person name="Mural R.J."/>
            <person name="Istrail S."/>
            <person name="Sutton G."/>
            <person name="Florea L."/>
            <person name="Halpern A.L."/>
            <person name="Mobarry C.M."/>
            <person name="Lippert R."/>
            <person name="Walenz B."/>
            <person name="Shatkay H."/>
            <person name="Dew I."/>
            <person name="Miller J.R."/>
            <person name="Flanigan M.J."/>
            <person name="Edwards N.J."/>
            <person name="Bolanos R."/>
            <person name="Fasulo D."/>
            <person name="Halldorsson B.V."/>
            <person name="Hannenhalli S."/>
            <person name="Turner R."/>
            <person name="Yooseph S."/>
            <person name="Lu F."/>
            <person name="Nusskern D.R."/>
            <person name="Shue B.C."/>
            <person name="Zheng X.H."/>
            <person name="Zhong F."/>
            <person name="Delcher A.L."/>
            <person name="Huson D.H."/>
            <person name="Kravitz S.A."/>
            <person name="Mouchard L."/>
            <person name="Reinert K."/>
            <person name="Remington K.A."/>
            <person name="Clark A.G."/>
            <person name="Waterman M.S."/>
            <person name="Eichler E.E."/>
            <person name="Adams M.D."/>
            <person name="Hunkapiller M.W."/>
            <person name="Myers E.W."/>
            <person name="Venter J.C."/>
        </authorList>
    </citation>
    <scope>NUCLEOTIDE SEQUENCE [LARGE SCALE GENOMIC DNA]</scope>
</reference>
<reference key="8">
    <citation type="journal article" date="2004" name="Genome Res.">
        <title>The status, quality, and expansion of the NIH full-length cDNA project: the Mammalian Gene Collection (MGC).</title>
        <authorList>
            <consortium name="The MGC Project Team"/>
        </authorList>
    </citation>
    <scope>NUCLEOTIDE SEQUENCE [LARGE SCALE MRNA] (ISOFORM 1)</scope>
    <source>
        <tissue>Kidney</tissue>
    </source>
</reference>
<reference key="9">
    <citation type="journal article" date="2009" name="Anal. Chem.">
        <title>Lys-N and trypsin cover complementary parts of the phosphoproteome in a refined SCX-based approach.</title>
        <authorList>
            <person name="Gauci S."/>
            <person name="Helbig A.O."/>
            <person name="Slijper M."/>
            <person name="Krijgsveld J."/>
            <person name="Heck A.J."/>
            <person name="Mohammed S."/>
        </authorList>
    </citation>
    <scope>ACETYLATION [LARGE SCALE ANALYSIS] AT ALA-2</scope>
    <scope>CLEAVAGE OF INITIATOR METHIONINE [LARGE SCALE ANALYSIS]</scope>
    <scope>IDENTIFICATION BY MASS SPECTROMETRY [LARGE SCALE ANALYSIS]</scope>
</reference>
<reference key="10">
    <citation type="journal article" date="2012" name="Mol. Cell. Proteomics">
        <title>Comparative large-scale characterisation of plant vs. mammal proteins reveals similar and idiosyncratic N-alpha acetylation features.</title>
        <authorList>
            <person name="Bienvenut W.V."/>
            <person name="Sumpton D."/>
            <person name="Martinez A."/>
            <person name="Lilla S."/>
            <person name="Espagne C."/>
            <person name="Meinnel T."/>
            <person name="Giglione C."/>
        </authorList>
    </citation>
    <scope>ACETYLATION [LARGE SCALE ANALYSIS] AT ALA-2</scope>
    <scope>CLEAVAGE OF INITIATOR METHIONINE [LARGE SCALE ANALYSIS]</scope>
    <scope>IDENTIFICATION BY MASS SPECTROMETRY [LARGE SCALE ANALYSIS]</scope>
</reference>
<reference key="11">
    <citation type="journal article" date="2015" name="Proteomics">
        <title>N-terminome analysis of the human mitochondrial proteome.</title>
        <authorList>
            <person name="Vaca Jacome A.S."/>
            <person name="Rabilloud T."/>
            <person name="Schaeffer-Reiss C."/>
            <person name="Rompais M."/>
            <person name="Ayoub D."/>
            <person name="Lane L."/>
            <person name="Bairoch A."/>
            <person name="Van Dorsselaer A."/>
            <person name="Carapito C."/>
        </authorList>
    </citation>
    <scope>ACETYLATION [LARGE SCALE ANALYSIS] AT ALA-2</scope>
    <scope>CLEAVAGE OF INITIATOR METHIONINE [LARGE SCALE ANALYSIS]</scope>
    <scope>IDENTIFICATION BY MASS SPECTROMETRY [LARGE SCALE ANALYSIS]</scope>
</reference>
<reference evidence="9 10 11 12 13 14 15 16" key="12">
    <citation type="journal article" date="2023" name="Mol. Cell">
        <title>Structure of the human ATP synthase.</title>
        <authorList>
            <person name="Lai Y."/>
            <person name="Zhang Y."/>
            <person name="Zhou S."/>
            <person name="Xu J."/>
            <person name="Du Z."/>
            <person name="Feng Z."/>
            <person name="Yu L."/>
            <person name="Zhao Z."/>
            <person name="Wang W."/>
            <person name="Tang Y."/>
            <person name="Yang X."/>
            <person name="Guddat L.W."/>
            <person name="Liu F."/>
            <person name="Gao Y."/>
            <person name="Rao Z."/>
            <person name="Gong H."/>
        </authorList>
    </citation>
    <scope>STRUCTURE BY ELECTRON MICROSCOPY (2.53 ANGSTROMS) OF 2-94</scope>
    <scope>IDENTIFICATION IN THE ATP SYNTHASE COMPLEX</scope>
    <scope>FUNCTION</scope>
    <scope>SUBUNIT</scope>
</reference>
<accession>P56134</accession>
<accession>C9J8H9</accession>
<accession>F8W7V3</accession>
<accession>O76079</accession>
<accession>Q6IBB3</accession>
<accession>Q96L83</accession>
<accession>Q9BTI8</accession>
<comment type="function">
    <text evidence="2 4 7">Subunit f, of the mitochondrial membrane ATP synthase complex (F(1)F(0) ATP synthase or Complex V) that produces ATP from ADP in the presence of a proton gradient across the membrane which is generated by electron transport complexes of the respiratory chain (PubMed:37244256). ATP synthase complex consist of a soluble F(1) head domain - the catalytic core - and a membrane F(1) domain - the membrane proton channel (PubMed:37244256). These two domains are linked by a central stalk rotating inside the F(1) region and a stationary peripheral stalk (PubMed:37244256). During catalysis, ATP synthesis in the catalytic domain of F(1) is coupled via a rotary mechanism of the central stalk subunits to proton translocation (Probable). In vivo, can only synthesize ATP although its ATP hydrolase activity can be activated artificially in vitro (By similarity). Part of the complex F(0) domain (PubMed:37244256).</text>
</comment>
<comment type="subunit">
    <text evidence="4">Component of the ATP synthase complex composed at least of ATP5F1A/subunit alpha, ATP5F1B/subunit beta, ATP5MC1/subunit c (homooctomer), MT-ATP6/subunit a, MT-ATP8/subunit 8, ATP5ME/subunit e, ATP5MF/subunit f, ATP5MG/subunit g, ATP5MK/subunit k, ATP5MJ/subunit j, ATP5F1C/subunit gamma, ATP5F1D/subunit delta, ATP5F1E/subunit epsilon, ATP5PF/subunit F6, ATP5PB/subunit b, ATP5PD/subunit d, ATP5PO/subunit OSCP (PubMed:37244256). ATP synthase complex consists of a soluble F(1) head domain (subunits alpha(3) and beta(3)) - the catalytic core - and a membrane F(0) domain - the membrane proton channel (subunits c, a, 8, e, f, g, k and j) (PubMed:37244256). These two domains are linked by a central stalk (subunits gamma, delta, and epsilon) rotating inside the F1 region and a stationary peripheral stalk (subunits F6, b, d, and OSCP) (PubMed:37244256).</text>
</comment>
<comment type="subcellular location">
    <subcellularLocation>
        <location>Mitochondrion</location>
    </subcellularLocation>
    <subcellularLocation>
        <location evidence="6">Mitochondrion inner membrane</location>
        <topology evidence="6">Single-pass membrane protein</topology>
    </subcellularLocation>
</comment>
<comment type="alternative products">
    <event type="alternative splicing"/>
    <isoform>
        <id>P56134-1</id>
        <name>1</name>
        <sequence type="displayed"/>
    </isoform>
    <isoform>
        <id>P56134-2</id>
        <name>2</name>
        <sequence type="described" ref="VSP_000437"/>
    </isoform>
    <isoform>
        <id>P56134-3</id>
        <name>3</name>
        <sequence type="described" ref="VSP_046746"/>
    </isoform>
    <isoform>
        <id>P56134-4</id>
        <name>4</name>
        <sequence type="described" ref="VSP_000437 VSP_046746"/>
    </isoform>
</comment>
<comment type="similarity">
    <text evidence="6">Belongs to the ATPase F chain family.</text>
</comment>
<sequence>MASVGECPAPVPVKDKKLLEVKLGELPSWILMRDFSPSGIFGAFQRGYYRYYNKYINVKKGSISGITMVLACYVLFSYSFSYKHLKHERLRKYH</sequence>
<protein>
    <recommendedName>
        <fullName evidence="6">ATP synthase F(0) complex subunit f, mitochondrial</fullName>
    </recommendedName>
    <alternativeName>
        <fullName evidence="6">ATP synthase membrane subunit f</fullName>
    </alternativeName>
</protein>
<keyword id="KW-0002">3D-structure</keyword>
<keyword id="KW-0007">Acetylation</keyword>
<keyword id="KW-0025">Alternative splicing</keyword>
<keyword id="KW-0066">ATP synthesis</keyword>
<keyword id="KW-0138">CF(0)</keyword>
<keyword id="KW-0375">Hydrogen ion transport</keyword>
<keyword id="KW-0406">Ion transport</keyword>
<keyword id="KW-0472">Membrane</keyword>
<keyword id="KW-0496">Mitochondrion</keyword>
<keyword id="KW-0999">Mitochondrion inner membrane</keyword>
<keyword id="KW-0597">Phosphoprotein</keyword>
<keyword id="KW-1267">Proteomics identification</keyword>
<keyword id="KW-1185">Reference proteome</keyword>
<keyword id="KW-0812">Transmembrane</keyword>
<keyword id="KW-1133">Transmembrane helix</keyword>
<keyword id="KW-0813">Transport</keyword>
<feature type="initiator methionine" description="Removed" evidence="17 18 19">
    <location>
        <position position="1"/>
    </location>
</feature>
<feature type="chain" id="PRO_0000194824" description="ATP synthase F(0) complex subunit f, mitochondrial">
    <location>
        <begin position="2"/>
        <end position="94"/>
    </location>
</feature>
<feature type="transmembrane region" description="Helical" evidence="4 16">
    <location>
        <begin position="68"/>
        <end position="85"/>
    </location>
</feature>
<feature type="modified residue" description="N-acetylalanine" evidence="17 18 19">
    <location>
        <position position="2"/>
    </location>
</feature>
<feature type="modified residue" description="Phosphoserine" evidence="1">
    <location>
        <position position="3"/>
    </location>
</feature>
<feature type="modified residue" description="N6-acetyllysine" evidence="3">
    <location>
        <position position="22"/>
    </location>
</feature>
<feature type="splice variant" id="VSP_000437" description="In isoform 2 and isoform 4." evidence="5">
    <location>
        <begin position="5"/>
        <end position="10"/>
    </location>
</feature>
<feature type="splice variant" id="VSP_046746" description="In isoform 3 and isoform 4." evidence="6">
    <original>GYYRYYNKYINVKKGSISGITMVLACYVLFSYSFSYKHLK</original>
    <variation>E</variation>
    <location>
        <begin position="47"/>
        <end position="86"/>
    </location>
</feature>
<feature type="sequence conflict" description="In Ref. 8; AAH03678." evidence="6" ref="8">
    <original>G</original>
    <variation>L</variation>
    <location>
        <position position="24"/>
    </location>
</feature>
<feature type="turn" evidence="20">
    <location>
        <begin position="21"/>
        <end position="23"/>
    </location>
</feature>
<feature type="helix" evidence="20">
    <location>
        <begin position="28"/>
        <end position="32"/>
    </location>
</feature>
<feature type="helix" evidence="20">
    <location>
        <begin position="37"/>
        <end position="55"/>
    </location>
</feature>
<feature type="helix" evidence="20">
    <location>
        <begin position="64"/>
        <end position="85"/>
    </location>
</feature>
<feature type="helix" evidence="21">
    <location>
        <begin position="86"/>
        <end position="88"/>
    </location>
</feature>
<dbReference type="EMBL" id="AF088918">
    <property type="protein sequence ID" value="AAC34895.1"/>
    <property type="molecule type" value="mRNA"/>
</dbReference>
<dbReference type="EMBL" id="AF047436">
    <property type="protein sequence ID" value="AAC39887.1"/>
    <property type="molecule type" value="mRNA"/>
</dbReference>
<dbReference type="EMBL" id="AY046911">
    <property type="protein sequence ID" value="AAL06647.1"/>
    <property type="molecule type" value="mRNA"/>
</dbReference>
<dbReference type="EMBL" id="CR456891">
    <property type="protein sequence ID" value="CAG33172.1"/>
    <property type="molecule type" value="mRNA"/>
</dbReference>
<dbReference type="EMBL" id="CR542155">
    <property type="protein sequence ID" value="CAG46952.1"/>
    <property type="molecule type" value="mRNA"/>
</dbReference>
<dbReference type="EMBL" id="AC073063">
    <property type="status" value="NOT_ANNOTATED_CDS"/>
    <property type="molecule type" value="Genomic_DNA"/>
</dbReference>
<dbReference type="EMBL" id="CH236956">
    <property type="protein sequence ID" value="EAL23877.1"/>
    <property type="molecule type" value="Genomic_DNA"/>
</dbReference>
<dbReference type="EMBL" id="CH471091">
    <property type="protein sequence ID" value="EAW76661.1"/>
    <property type="molecule type" value="Genomic_DNA"/>
</dbReference>
<dbReference type="EMBL" id="BC003678">
    <property type="protein sequence ID" value="AAH03678.1"/>
    <property type="molecule type" value="mRNA"/>
</dbReference>
<dbReference type="CCDS" id="CCDS34692.1">
    <molecule id="P56134-3"/>
</dbReference>
<dbReference type="CCDS" id="CCDS47653.1">
    <molecule id="P56134-4"/>
</dbReference>
<dbReference type="CCDS" id="CCDS47654.1">
    <molecule id="P56134-2"/>
</dbReference>
<dbReference type="CCDS" id="CCDS5665.1">
    <molecule id="P56134-1"/>
</dbReference>
<dbReference type="RefSeq" id="NP_001003713.1">
    <molecule id="P56134-2"/>
    <property type="nucleotide sequence ID" value="NM_001003713.4"/>
</dbReference>
<dbReference type="RefSeq" id="NP_001003714.1">
    <molecule id="P56134-3"/>
    <property type="nucleotide sequence ID" value="NM_001003714.4"/>
</dbReference>
<dbReference type="RefSeq" id="NP_001034267.1">
    <molecule id="P56134-4"/>
    <property type="nucleotide sequence ID" value="NM_001039178.4"/>
</dbReference>
<dbReference type="RefSeq" id="NP_004880.1">
    <molecule id="P56134-1"/>
    <property type="nucleotide sequence ID" value="NM_004889.5"/>
</dbReference>
<dbReference type="PDB" id="8H9F">
    <property type="method" value="EM"/>
    <property type="resolution" value="2.69 A"/>
    <property type="chains" value="R=2-94"/>
</dbReference>
<dbReference type="PDB" id="8H9J">
    <property type="method" value="EM"/>
    <property type="resolution" value="3.26 A"/>
    <property type="chains" value="R=2-94"/>
</dbReference>
<dbReference type="PDB" id="8H9M">
    <property type="method" value="EM"/>
    <property type="resolution" value="3.00 A"/>
    <property type="chains" value="R=2-94"/>
</dbReference>
<dbReference type="PDB" id="8H9Q">
    <property type="method" value="EM"/>
    <property type="resolution" value="3.47 A"/>
    <property type="chains" value="R=2-94"/>
</dbReference>
<dbReference type="PDB" id="8H9S">
    <property type="method" value="EM"/>
    <property type="resolution" value="2.53 A"/>
    <property type="chains" value="R=2-94"/>
</dbReference>
<dbReference type="PDB" id="8H9T">
    <property type="method" value="EM"/>
    <property type="resolution" value="2.77 A"/>
    <property type="chains" value="R=2-94"/>
</dbReference>
<dbReference type="PDB" id="8H9U">
    <property type="method" value="EM"/>
    <property type="resolution" value="2.61 A"/>
    <property type="chains" value="R=2-94"/>
</dbReference>
<dbReference type="PDB" id="8H9V">
    <property type="method" value="EM"/>
    <property type="resolution" value="3.02 A"/>
    <property type="chains" value="R=2-94"/>
</dbReference>
<dbReference type="PDB" id="8KHF">
    <property type="method" value="EM"/>
    <property type="resolution" value="3.13 A"/>
    <property type="chains" value="R=2-94"/>
</dbReference>
<dbReference type="PDB" id="8KI3">
    <property type="method" value="EM"/>
    <property type="resolution" value="2.89 A"/>
    <property type="chains" value="R=2-94"/>
</dbReference>
<dbReference type="PDBsum" id="8H9F"/>
<dbReference type="PDBsum" id="8H9J"/>
<dbReference type="PDBsum" id="8H9M"/>
<dbReference type="PDBsum" id="8H9Q"/>
<dbReference type="PDBsum" id="8H9S"/>
<dbReference type="PDBsum" id="8H9T"/>
<dbReference type="PDBsum" id="8H9U"/>
<dbReference type="PDBsum" id="8H9V"/>
<dbReference type="PDBsum" id="8KHF"/>
<dbReference type="PDBsum" id="8KI3"/>
<dbReference type="EMDB" id="EMD-34565"/>
<dbReference type="EMDB" id="EMD-34569"/>
<dbReference type="EMDB" id="EMD-34573"/>
<dbReference type="EMDB" id="EMD-34577"/>
<dbReference type="EMDB" id="EMD-34580"/>
<dbReference type="EMDB" id="EMD-34581"/>
<dbReference type="EMDB" id="EMD-34582"/>
<dbReference type="EMDB" id="EMD-34583"/>
<dbReference type="EMDB" id="EMD-37243"/>
<dbReference type="EMDB" id="EMD-37251"/>
<dbReference type="SMR" id="P56134"/>
<dbReference type="BioGRID" id="114923">
    <property type="interactions" value="131"/>
</dbReference>
<dbReference type="ComplexPortal" id="CPX-6151">
    <property type="entry name" value="Mitochondrial proton-transporting ATP synthase complex"/>
</dbReference>
<dbReference type="CORUM" id="P56134"/>
<dbReference type="FunCoup" id="P56134">
    <property type="interactions" value="1450"/>
</dbReference>
<dbReference type="IntAct" id="P56134">
    <property type="interactions" value="64"/>
</dbReference>
<dbReference type="MINT" id="P56134"/>
<dbReference type="STRING" id="9606.ENSP00000292475"/>
<dbReference type="TCDB" id="3.A.2.1.15">
    <property type="family name" value="the h+- or na+-translocating f-type, v-type and a-type atpase (f-atpase) superfamily"/>
</dbReference>
<dbReference type="GlyGen" id="P56134">
    <property type="glycosylation" value="1 site, 1 O-linked glycan (1 site)"/>
</dbReference>
<dbReference type="iPTMnet" id="P56134"/>
<dbReference type="PhosphoSitePlus" id="P56134"/>
<dbReference type="SwissPalm" id="P56134"/>
<dbReference type="BioMuta" id="ATP5J2"/>
<dbReference type="DMDM" id="7404340"/>
<dbReference type="jPOST" id="P56134"/>
<dbReference type="MassIVE" id="P56134"/>
<dbReference type="PaxDb" id="9606-ENSP00000292475"/>
<dbReference type="PeptideAtlas" id="P56134"/>
<dbReference type="PRIDE" id="P56134"/>
<dbReference type="ProteomicsDB" id="30017"/>
<dbReference type="ProteomicsDB" id="56886">
    <molecule id="P56134-1"/>
</dbReference>
<dbReference type="ProteomicsDB" id="56887">
    <molecule id="P56134-2"/>
</dbReference>
<dbReference type="ProteomicsDB" id="9047"/>
<dbReference type="Pumba" id="P56134"/>
<dbReference type="TopDownProteomics" id="P56134-1">
    <molecule id="P56134-1"/>
</dbReference>
<dbReference type="TopDownProteomics" id="P56134-2">
    <molecule id="P56134-2"/>
</dbReference>
<dbReference type="Antibodypedia" id="56015">
    <property type="antibodies" value="120 antibodies from 19 providers"/>
</dbReference>
<dbReference type="DNASU" id="9551"/>
<dbReference type="Ensembl" id="ENST00000292475.8">
    <molecule id="P56134-1"/>
    <property type="protein sequence ID" value="ENSP00000292475.4"/>
    <property type="gene ID" value="ENSG00000241468.8"/>
</dbReference>
<dbReference type="Ensembl" id="ENST00000359832.8">
    <molecule id="P56134-3"/>
    <property type="protein sequence ID" value="ENSP00000352890.4"/>
    <property type="gene ID" value="ENSG00000241468.8"/>
</dbReference>
<dbReference type="Ensembl" id="ENST00000394186.3">
    <molecule id="P56134-2"/>
    <property type="protein sequence ID" value="ENSP00000377740.3"/>
    <property type="gene ID" value="ENSG00000241468.8"/>
</dbReference>
<dbReference type="Ensembl" id="ENST00000414062.5">
    <molecule id="P56134-4"/>
    <property type="protein sequence ID" value="ENSP00000412149.1"/>
    <property type="gene ID" value="ENSG00000241468.8"/>
</dbReference>
<dbReference type="Ensembl" id="ENST00000488775.5">
    <molecule id="P56134-4"/>
    <property type="protein sequence ID" value="ENSP00000418197.1"/>
    <property type="gene ID" value="ENSG00000241468.8"/>
</dbReference>
<dbReference type="GeneID" id="9551"/>
<dbReference type="KEGG" id="hsa:9551"/>
<dbReference type="MANE-Select" id="ENST00000292475.8">
    <property type="protein sequence ID" value="ENSP00000292475.4"/>
    <property type="RefSeq nucleotide sequence ID" value="NM_004889.5"/>
    <property type="RefSeq protein sequence ID" value="NP_004880.1"/>
</dbReference>
<dbReference type="UCSC" id="uc003uql.4">
    <molecule id="P56134-1"/>
    <property type="organism name" value="human"/>
</dbReference>
<dbReference type="AGR" id="HGNC:848"/>
<dbReference type="CTD" id="9551"/>
<dbReference type="DisGeNET" id="9551"/>
<dbReference type="GeneCards" id="ATP5MF"/>
<dbReference type="HGNC" id="HGNC:848">
    <property type="gene designation" value="ATP5MF"/>
</dbReference>
<dbReference type="HPA" id="ENSG00000241468">
    <property type="expression patterns" value="Low tissue specificity"/>
</dbReference>
<dbReference type="MalaCards" id="ATP5MF"/>
<dbReference type="MIM" id="619792">
    <property type="type" value="gene"/>
</dbReference>
<dbReference type="neXtProt" id="NX_P56134"/>
<dbReference type="OpenTargets" id="ENSG00000241468"/>
<dbReference type="PharmGKB" id="PA25138"/>
<dbReference type="VEuPathDB" id="HostDB:ENSG00000241468"/>
<dbReference type="eggNOG" id="KOG4092">
    <property type="taxonomic scope" value="Eukaryota"/>
</dbReference>
<dbReference type="GeneTree" id="ENSGT00510000046986"/>
<dbReference type="HOGENOM" id="CLU_3227123_0_0_1"/>
<dbReference type="InParanoid" id="P56134"/>
<dbReference type="OMA" id="HKYVQPK"/>
<dbReference type="OrthoDB" id="8921675at2759"/>
<dbReference type="PAN-GO" id="P56134">
    <property type="GO annotations" value="3 GO annotations based on evolutionary models"/>
</dbReference>
<dbReference type="PhylomeDB" id="P56134"/>
<dbReference type="TreeFam" id="TF342865"/>
<dbReference type="BioCyc" id="MetaCyc:HS08550-MONOMER"/>
<dbReference type="PathwayCommons" id="P56134"/>
<dbReference type="Reactome" id="R-HSA-163210">
    <property type="pathway name" value="Formation of ATP by chemiosmotic coupling"/>
</dbReference>
<dbReference type="Reactome" id="R-HSA-8949613">
    <property type="pathway name" value="Cristae formation"/>
</dbReference>
<dbReference type="SignaLink" id="P56134"/>
<dbReference type="BioGRID-ORCS" id="9551">
    <property type="hits" value="449 hits in 1117 CRISPR screens"/>
</dbReference>
<dbReference type="GeneWiki" id="ATP5J2"/>
<dbReference type="GenomeRNAi" id="9551"/>
<dbReference type="Pharos" id="P56134">
    <property type="development level" value="Tbio"/>
</dbReference>
<dbReference type="PRO" id="PR:P56134"/>
<dbReference type="Proteomes" id="UP000005640">
    <property type="component" value="Chromosome 7"/>
</dbReference>
<dbReference type="RNAct" id="P56134">
    <property type="molecule type" value="protein"/>
</dbReference>
<dbReference type="Bgee" id="ENSG00000241468">
    <property type="expression patterns" value="Expressed in apex of heart and 212 other cell types or tissues"/>
</dbReference>
<dbReference type="ExpressionAtlas" id="P56134">
    <property type="expression patterns" value="baseline and differential"/>
</dbReference>
<dbReference type="GO" id="GO:0005743">
    <property type="term" value="C:mitochondrial inner membrane"/>
    <property type="evidence" value="ECO:0000304"/>
    <property type="project" value="Reactome"/>
</dbReference>
<dbReference type="GO" id="GO:0005739">
    <property type="term" value="C:mitochondrion"/>
    <property type="evidence" value="ECO:0000314"/>
    <property type="project" value="HPA"/>
</dbReference>
<dbReference type="GO" id="GO:0031965">
    <property type="term" value="C:nuclear membrane"/>
    <property type="evidence" value="ECO:0000314"/>
    <property type="project" value="HPA"/>
</dbReference>
<dbReference type="GO" id="GO:0045259">
    <property type="term" value="C:proton-transporting ATP synthase complex"/>
    <property type="evidence" value="ECO:0000314"/>
    <property type="project" value="UniProtKB"/>
</dbReference>
<dbReference type="GO" id="GO:0015986">
    <property type="term" value="P:proton motive force-driven ATP synthesis"/>
    <property type="evidence" value="ECO:0000303"/>
    <property type="project" value="ComplexPortal"/>
</dbReference>
<dbReference type="GO" id="GO:0042776">
    <property type="term" value="P:proton motive force-driven mitochondrial ATP synthesis"/>
    <property type="evidence" value="ECO:0000314"/>
    <property type="project" value="UniProtKB"/>
</dbReference>
<dbReference type="GO" id="GO:1902600">
    <property type="term" value="P:proton transmembrane transport"/>
    <property type="evidence" value="ECO:0000303"/>
    <property type="project" value="UniProtKB"/>
</dbReference>
<dbReference type="InterPro" id="IPR019344">
    <property type="entry name" value="F1F0-ATPsyn_F_prd"/>
</dbReference>
<dbReference type="PANTHER" id="PTHR13080">
    <property type="entry name" value="ATP SYNTHASE F CHAIN, MITOCHONDRIAL-RELATED"/>
    <property type="match status" value="1"/>
</dbReference>
<dbReference type="PANTHER" id="PTHR13080:SF16">
    <property type="entry name" value="ATP SYNTHASE SUBUNIT F, MITOCHONDRIAL"/>
    <property type="match status" value="1"/>
</dbReference>
<dbReference type="Pfam" id="PF10206">
    <property type="entry name" value="WRW"/>
    <property type="match status" value="1"/>
</dbReference>
<name>ATPK_HUMAN</name>
<evidence type="ECO:0000250" key="1">
    <source>
        <dbReference type="UniProtKB" id="D3ZAF6"/>
    </source>
</evidence>
<evidence type="ECO:0000250" key="2">
    <source>
        <dbReference type="UniProtKB" id="P19483"/>
    </source>
</evidence>
<evidence type="ECO:0000250" key="3">
    <source>
        <dbReference type="UniProtKB" id="P56135"/>
    </source>
</evidence>
<evidence type="ECO:0000269" key="4">
    <source>
    </source>
</evidence>
<evidence type="ECO:0000303" key="5">
    <source ref="3"/>
</evidence>
<evidence type="ECO:0000305" key="6"/>
<evidence type="ECO:0000305" key="7">
    <source>
    </source>
</evidence>
<evidence type="ECO:0000312" key="8">
    <source>
        <dbReference type="HGNC" id="HGNC:848"/>
    </source>
</evidence>
<evidence type="ECO:0007744" key="9">
    <source>
        <dbReference type="PDB" id="8H9F"/>
    </source>
</evidence>
<evidence type="ECO:0007744" key="10">
    <source>
        <dbReference type="PDB" id="8H9J"/>
    </source>
</evidence>
<evidence type="ECO:0007744" key="11">
    <source>
        <dbReference type="PDB" id="8H9M"/>
    </source>
</evidence>
<evidence type="ECO:0007744" key="12">
    <source>
        <dbReference type="PDB" id="8H9Q"/>
    </source>
</evidence>
<evidence type="ECO:0007744" key="13">
    <source>
        <dbReference type="PDB" id="8H9S"/>
    </source>
</evidence>
<evidence type="ECO:0007744" key="14">
    <source>
        <dbReference type="PDB" id="8H9T"/>
    </source>
</evidence>
<evidence type="ECO:0007744" key="15">
    <source>
        <dbReference type="PDB" id="8H9U"/>
    </source>
</evidence>
<evidence type="ECO:0007744" key="16">
    <source>
        <dbReference type="PDB" id="8H9V"/>
    </source>
</evidence>
<evidence type="ECO:0007744" key="17">
    <source>
    </source>
</evidence>
<evidence type="ECO:0007744" key="18">
    <source>
    </source>
</evidence>
<evidence type="ECO:0007744" key="19">
    <source>
    </source>
</evidence>
<evidence type="ECO:0007829" key="20">
    <source>
        <dbReference type="PDB" id="8H9M"/>
    </source>
</evidence>
<evidence type="ECO:0007829" key="21">
    <source>
        <dbReference type="PDB" id="8H9V"/>
    </source>
</evidence>